<keyword id="KW-0963">Cytoplasm</keyword>
<keyword id="KW-0240">DNA-directed RNA polymerase</keyword>
<keyword id="KW-0548">Nucleotidyltransferase</keyword>
<keyword id="KW-1185">Reference proteome</keyword>
<keyword id="KW-0804">Transcription</keyword>
<keyword id="KW-0808">Transferase</keyword>
<reference key="1">
    <citation type="submission" date="2006-10" db="EMBL/GenBank/DDBJ databases">
        <title>Complete sequence of Methanosaeta thermophila PT.</title>
        <authorList>
            <consortium name="US DOE Joint Genome Institute"/>
            <person name="Copeland A."/>
            <person name="Lucas S."/>
            <person name="Lapidus A."/>
            <person name="Barry K."/>
            <person name="Detter J.C."/>
            <person name="Glavina del Rio T."/>
            <person name="Hammon N."/>
            <person name="Israni S."/>
            <person name="Pitluck S."/>
            <person name="Chain P."/>
            <person name="Malfatti S."/>
            <person name="Shin M."/>
            <person name="Vergez L."/>
            <person name="Schmutz J."/>
            <person name="Larimer F."/>
            <person name="Land M."/>
            <person name="Hauser L."/>
            <person name="Kyrpides N."/>
            <person name="Kim E."/>
            <person name="Smith K.S."/>
            <person name="Ingram-Smith C."/>
            <person name="Richardson P."/>
        </authorList>
    </citation>
    <scope>NUCLEOTIDE SEQUENCE [LARGE SCALE GENOMIC DNA]</scope>
    <source>
        <strain>DSM 6194 / JCM 14653 / NBRC 101360 / PT</strain>
    </source>
</reference>
<organism>
    <name type="scientific">Methanothrix thermoacetophila (strain DSM 6194 / JCM 14653 / NBRC 101360 / PT)</name>
    <name type="common">Methanosaeta thermophila</name>
    <dbReference type="NCBI Taxonomy" id="349307"/>
    <lineage>
        <taxon>Archaea</taxon>
        <taxon>Methanobacteriati</taxon>
        <taxon>Methanobacteriota</taxon>
        <taxon>Stenosarchaea group</taxon>
        <taxon>Methanomicrobia</taxon>
        <taxon>Methanotrichales</taxon>
        <taxon>Methanotrichaceae</taxon>
        <taxon>Methanothrix</taxon>
    </lineage>
</organism>
<feature type="chain" id="PRO_1000002194" description="DNA-directed RNA polymerase subunit Rpo5">
    <location>
        <begin position="1"/>
        <end position="78"/>
    </location>
</feature>
<sequence>MKRFAVQDHELVPEHILLTPEEAQQVLMQYGVEARHLPKIHVTDPVAKEIGAKVGDIIKIKRKSPTAKESIFYRLVID</sequence>
<evidence type="ECO:0000255" key="1">
    <source>
        <dbReference type="HAMAP-Rule" id="MF_00025"/>
    </source>
</evidence>
<dbReference type="EC" id="2.7.7.6" evidence="1"/>
<dbReference type="EMBL" id="CP000477">
    <property type="protein sequence ID" value="ABK13829.1"/>
    <property type="molecule type" value="Genomic_DNA"/>
</dbReference>
<dbReference type="RefSeq" id="WP_011695230.1">
    <property type="nucleotide sequence ID" value="NC_008553.1"/>
</dbReference>
<dbReference type="SMR" id="A0B555"/>
<dbReference type="STRING" id="349307.Mthe_0026"/>
<dbReference type="GeneID" id="4463404"/>
<dbReference type="KEGG" id="mtp:Mthe_0026"/>
<dbReference type="HOGENOM" id="CLU_058320_4_0_2"/>
<dbReference type="OrthoDB" id="30537at2157"/>
<dbReference type="Proteomes" id="UP000000674">
    <property type="component" value="Chromosome"/>
</dbReference>
<dbReference type="GO" id="GO:0005737">
    <property type="term" value="C:cytoplasm"/>
    <property type="evidence" value="ECO:0007669"/>
    <property type="project" value="UniProtKB-SubCell"/>
</dbReference>
<dbReference type="GO" id="GO:0000428">
    <property type="term" value="C:DNA-directed RNA polymerase complex"/>
    <property type="evidence" value="ECO:0007669"/>
    <property type="project" value="UniProtKB-KW"/>
</dbReference>
<dbReference type="GO" id="GO:0003677">
    <property type="term" value="F:DNA binding"/>
    <property type="evidence" value="ECO:0007669"/>
    <property type="project" value="InterPro"/>
</dbReference>
<dbReference type="GO" id="GO:0003899">
    <property type="term" value="F:DNA-directed RNA polymerase activity"/>
    <property type="evidence" value="ECO:0007669"/>
    <property type="project" value="UniProtKB-UniRule"/>
</dbReference>
<dbReference type="GO" id="GO:0006366">
    <property type="term" value="P:transcription by RNA polymerase II"/>
    <property type="evidence" value="ECO:0007669"/>
    <property type="project" value="TreeGrafter"/>
</dbReference>
<dbReference type="GO" id="GO:0006362">
    <property type="term" value="P:transcription elongation by RNA polymerase I"/>
    <property type="evidence" value="ECO:0007669"/>
    <property type="project" value="TreeGrafter"/>
</dbReference>
<dbReference type="GO" id="GO:0042797">
    <property type="term" value="P:tRNA transcription by RNA polymerase III"/>
    <property type="evidence" value="ECO:0007669"/>
    <property type="project" value="TreeGrafter"/>
</dbReference>
<dbReference type="Gene3D" id="3.90.940.20">
    <property type="entry name" value="RPB5-like RNA polymerase subunit"/>
    <property type="match status" value="1"/>
</dbReference>
<dbReference type="HAMAP" id="MF_00025">
    <property type="entry name" value="RNApol_Rpo5_RPB5"/>
    <property type="match status" value="1"/>
</dbReference>
<dbReference type="InterPro" id="IPR014381">
    <property type="entry name" value="Arch_Rpo5/euc_Rpb5"/>
</dbReference>
<dbReference type="InterPro" id="IPR000783">
    <property type="entry name" value="RNA_pol_subH/Rpb5_C"/>
</dbReference>
<dbReference type="InterPro" id="IPR020608">
    <property type="entry name" value="RNA_pol_subH/Rpb5_CS"/>
</dbReference>
<dbReference type="InterPro" id="IPR035913">
    <property type="entry name" value="RPB5-like_sf"/>
</dbReference>
<dbReference type="NCBIfam" id="NF007129">
    <property type="entry name" value="PRK09570.1"/>
    <property type="match status" value="1"/>
</dbReference>
<dbReference type="PANTHER" id="PTHR10535">
    <property type="entry name" value="DNA-DIRECTED RNA POLYMERASES I, II, AND III SUBUNIT RPABC1"/>
    <property type="match status" value="1"/>
</dbReference>
<dbReference type="PANTHER" id="PTHR10535:SF0">
    <property type="entry name" value="DNA-DIRECTED RNA POLYMERASES I, II, AND III SUBUNIT RPABC1"/>
    <property type="match status" value="1"/>
</dbReference>
<dbReference type="Pfam" id="PF01191">
    <property type="entry name" value="RNA_pol_Rpb5_C"/>
    <property type="match status" value="1"/>
</dbReference>
<dbReference type="SUPFAM" id="SSF55287">
    <property type="entry name" value="RPB5-like RNA polymerase subunit"/>
    <property type="match status" value="1"/>
</dbReference>
<dbReference type="PROSITE" id="PS01110">
    <property type="entry name" value="RNA_POL_H_23KD"/>
    <property type="match status" value="1"/>
</dbReference>
<proteinExistence type="inferred from homology"/>
<protein>
    <recommendedName>
        <fullName evidence="1">DNA-directed RNA polymerase subunit Rpo5</fullName>
        <ecNumber evidence="1">2.7.7.6</ecNumber>
    </recommendedName>
    <alternativeName>
        <fullName evidence="1">DNA-directed RNA polymerase subunit H</fullName>
    </alternativeName>
</protein>
<comment type="function">
    <text evidence="1">DNA-dependent RNA polymerase (RNAP) catalyzes the transcription of DNA into RNA using the four ribonucleoside triphosphates as substrates.</text>
</comment>
<comment type="catalytic activity">
    <reaction evidence="1">
        <text>RNA(n) + a ribonucleoside 5'-triphosphate = RNA(n+1) + diphosphate</text>
        <dbReference type="Rhea" id="RHEA:21248"/>
        <dbReference type="Rhea" id="RHEA-COMP:14527"/>
        <dbReference type="Rhea" id="RHEA-COMP:17342"/>
        <dbReference type="ChEBI" id="CHEBI:33019"/>
        <dbReference type="ChEBI" id="CHEBI:61557"/>
        <dbReference type="ChEBI" id="CHEBI:140395"/>
        <dbReference type="EC" id="2.7.7.6"/>
    </reaction>
</comment>
<comment type="subunit">
    <text evidence="1">Part of the RNA polymerase complex.</text>
</comment>
<comment type="subcellular location">
    <subcellularLocation>
        <location evidence="1">Cytoplasm</location>
    </subcellularLocation>
</comment>
<comment type="similarity">
    <text evidence="1">Belongs to the archaeal Rpo5/eukaryotic RPB5 RNA polymerase subunit family.</text>
</comment>
<gene>
    <name evidence="1" type="primary">rpo5</name>
    <name evidence="1" type="synonym">rpoH</name>
    <name type="ordered locus">Mthe_0026</name>
</gene>
<accession>A0B555</accession>
<name>RPO5_METTP</name>